<dbReference type="EC" id="3.6.4.-" evidence="1"/>
<dbReference type="EMBL" id="CP000436">
    <property type="protein sequence ID" value="ABI25789.1"/>
    <property type="molecule type" value="Genomic_DNA"/>
</dbReference>
<dbReference type="SMR" id="Q0I5G1"/>
<dbReference type="KEGG" id="hso:HS_1516"/>
<dbReference type="eggNOG" id="COG0553">
    <property type="taxonomic scope" value="Bacteria"/>
</dbReference>
<dbReference type="HOGENOM" id="CLU_011520_0_0_6"/>
<dbReference type="GO" id="GO:0005524">
    <property type="term" value="F:ATP binding"/>
    <property type="evidence" value="ECO:0007669"/>
    <property type="project" value="UniProtKB-UniRule"/>
</dbReference>
<dbReference type="GO" id="GO:0003677">
    <property type="term" value="F:DNA binding"/>
    <property type="evidence" value="ECO:0007669"/>
    <property type="project" value="UniProtKB-KW"/>
</dbReference>
<dbReference type="GO" id="GO:0004386">
    <property type="term" value="F:helicase activity"/>
    <property type="evidence" value="ECO:0007669"/>
    <property type="project" value="UniProtKB-UniRule"/>
</dbReference>
<dbReference type="GO" id="GO:0016817">
    <property type="term" value="F:hydrolase activity, acting on acid anhydrides"/>
    <property type="evidence" value="ECO:0007669"/>
    <property type="project" value="InterPro"/>
</dbReference>
<dbReference type="GO" id="GO:0006355">
    <property type="term" value="P:regulation of DNA-templated transcription"/>
    <property type="evidence" value="ECO:0007669"/>
    <property type="project" value="UniProtKB-UniRule"/>
</dbReference>
<dbReference type="CDD" id="cd18011">
    <property type="entry name" value="DEXDc_RapA"/>
    <property type="match status" value="1"/>
</dbReference>
<dbReference type="CDD" id="cd18793">
    <property type="entry name" value="SF2_C_SNF"/>
    <property type="match status" value="1"/>
</dbReference>
<dbReference type="Gene3D" id="2.30.30.140">
    <property type="match status" value="1"/>
</dbReference>
<dbReference type="Gene3D" id="2.30.30.930">
    <property type="match status" value="1"/>
</dbReference>
<dbReference type="Gene3D" id="3.30.360.80">
    <property type="match status" value="1"/>
</dbReference>
<dbReference type="Gene3D" id="6.10.140.1500">
    <property type="match status" value="1"/>
</dbReference>
<dbReference type="Gene3D" id="6.10.140.2230">
    <property type="match status" value="1"/>
</dbReference>
<dbReference type="Gene3D" id="3.40.50.300">
    <property type="entry name" value="P-loop containing nucleotide triphosphate hydrolases"/>
    <property type="match status" value="1"/>
</dbReference>
<dbReference type="Gene3D" id="3.40.50.10810">
    <property type="entry name" value="Tandem AAA-ATPase domain"/>
    <property type="match status" value="1"/>
</dbReference>
<dbReference type="HAMAP" id="MF_01821">
    <property type="entry name" value="Helicase_RapA"/>
    <property type="match status" value="1"/>
</dbReference>
<dbReference type="InterPro" id="IPR014001">
    <property type="entry name" value="Helicase_ATP-bd"/>
</dbReference>
<dbReference type="InterPro" id="IPR001650">
    <property type="entry name" value="Helicase_C-like"/>
</dbReference>
<dbReference type="InterPro" id="IPR023949">
    <property type="entry name" value="Helicase_RapA"/>
</dbReference>
<dbReference type="InterPro" id="IPR027417">
    <property type="entry name" value="P-loop_NTPase"/>
</dbReference>
<dbReference type="InterPro" id="IPR022737">
    <property type="entry name" value="RapA_C"/>
</dbReference>
<dbReference type="InterPro" id="IPR038718">
    <property type="entry name" value="SNF2-like_sf"/>
</dbReference>
<dbReference type="InterPro" id="IPR049730">
    <property type="entry name" value="SNF2/RAD54-like_C"/>
</dbReference>
<dbReference type="InterPro" id="IPR000330">
    <property type="entry name" value="SNF2_N"/>
</dbReference>
<dbReference type="InterPro" id="IPR040765">
    <property type="entry name" value="Tudor_1_RapA"/>
</dbReference>
<dbReference type="InterPro" id="IPR040766">
    <property type="entry name" value="Tudor_2_RapA"/>
</dbReference>
<dbReference type="NCBIfam" id="NF003426">
    <property type="entry name" value="PRK04914.1"/>
    <property type="match status" value="1"/>
</dbReference>
<dbReference type="PANTHER" id="PTHR45766">
    <property type="entry name" value="DNA ANNEALING HELICASE AND ENDONUCLEASE ZRANB3 FAMILY MEMBER"/>
    <property type="match status" value="1"/>
</dbReference>
<dbReference type="PANTHER" id="PTHR45766:SF6">
    <property type="entry name" value="SWI_SNF-RELATED MATRIX-ASSOCIATED ACTIN-DEPENDENT REGULATOR OF CHROMATIN SUBFAMILY A-LIKE PROTEIN 1"/>
    <property type="match status" value="1"/>
</dbReference>
<dbReference type="Pfam" id="PF00271">
    <property type="entry name" value="Helicase_C"/>
    <property type="match status" value="1"/>
</dbReference>
<dbReference type="Pfam" id="PF12137">
    <property type="entry name" value="RapA_C"/>
    <property type="match status" value="1"/>
</dbReference>
<dbReference type="Pfam" id="PF00176">
    <property type="entry name" value="SNF2-rel_dom"/>
    <property type="match status" value="1"/>
</dbReference>
<dbReference type="Pfam" id="PF18339">
    <property type="entry name" value="Tudor_1_RapA"/>
    <property type="match status" value="1"/>
</dbReference>
<dbReference type="Pfam" id="PF18337">
    <property type="entry name" value="Tudor_RapA"/>
    <property type="match status" value="1"/>
</dbReference>
<dbReference type="SMART" id="SM00487">
    <property type="entry name" value="DEXDc"/>
    <property type="match status" value="1"/>
</dbReference>
<dbReference type="SMART" id="SM00490">
    <property type="entry name" value="HELICc"/>
    <property type="match status" value="1"/>
</dbReference>
<dbReference type="SUPFAM" id="SSF52540">
    <property type="entry name" value="P-loop containing nucleoside triphosphate hydrolases"/>
    <property type="match status" value="2"/>
</dbReference>
<dbReference type="PROSITE" id="PS51192">
    <property type="entry name" value="HELICASE_ATP_BIND_1"/>
    <property type="match status" value="1"/>
</dbReference>
<dbReference type="PROSITE" id="PS51194">
    <property type="entry name" value="HELICASE_CTER"/>
    <property type="match status" value="1"/>
</dbReference>
<protein>
    <recommendedName>
        <fullName evidence="1">RNA polymerase-associated protein RapA</fullName>
        <ecNumber evidence="1">3.6.4.-</ecNumber>
    </recommendedName>
    <alternativeName>
        <fullName evidence="1">ATP-dependent helicase HepA</fullName>
    </alternativeName>
</protein>
<comment type="function">
    <text evidence="1">Transcription regulator that activates transcription by stimulating RNA polymerase (RNAP) recycling in case of stress conditions such as supercoiled DNA or high salt concentrations. Probably acts by releasing the RNAP, when it is trapped or immobilized on tightly supercoiled DNA. Does not activate transcription on linear DNA. Probably not involved in DNA repair.</text>
</comment>
<comment type="subunit">
    <text evidence="1">Interacts with the RNAP. Has a higher affinity for the core RNAP than for the holoenzyme. Its ATPase activity is stimulated by binding to RNAP.</text>
</comment>
<comment type="similarity">
    <text evidence="1">Belongs to the SNF2/RAD54 helicase family. RapA subfamily.</text>
</comment>
<keyword id="KW-0010">Activator</keyword>
<keyword id="KW-0067">ATP-binding</keyword>
<keyword id="KW-0238">DNA-binding</keyword>
<keyword id="KW-0347">Helicase</keyword>
<keyword id="KW-0378">Hydrolase</keyword>
<keyword id="KW-0547">Nucleotide-binding</keyword>
<keyword id="KW-0804">Transcription</keyword>
<keyword id="KW-0805">Transcription regulation</keyword>
<organism>
    <name type="scientific">Histophilus somni (strain 129Pt)</name>
    <name type="common">Haemophilus somnus</name>
    <dbReference type="NCBI Taxonomy" id="205914"/>
    <lineage>
        <taxon>Bacteria</taxon>
        <taxon>Pseudomonadati</taxon>
        <taxon>Pseudomonadota</taxon>
        <taxon>Gammaproteobacteria</taxon>
        <taxon>Pasteurellales</taxon>
        <taxon>Pasteurellaceae</taxon>
        <taxon>Histophilus</taxon>
    </lineage>
</organism>
<reference key="1">
    <citation type="journal article" date="2007" name="J. Bacteriol.">
        <title>Complete genome sequence of Haemophilus somnus (Histophilus somni) strain 129Pt and comparison to Haemophilus ducreyi 35000HP and Haemophilus influenzae Rd.</title>
        <authorList>
            <person name="Challacombe J.F."/>
            <person name="Duncan A.J."/>
            <person name="Brettin T.S."/>
            <person name="Bruce D."/>
            <person name="Chertkov O."/>
            <person name="Detter J.C."/>
            <person name="Han C.S."/>
            <person name="Misra M."/>
            <person name="Richardson P."/>
            <person name="Tapia R."/>
            <person name="Thayer N."/>
            <person name="Xie G."/>
            <person name="Inzana T.J."/>
        </authorList>
    </citation>
    <scope>NUCLEOTIDE SEQUENCE [LARGE SCALE GENOMIC DNA]</scope>
    <source>
        <strain>129Pt</strain>
    </source>
</reference>
<gene>
    <name evidence="1" type="primary">rapA</name>
    <name type="ordered locus">HS_1516</name>
</gene>
<proteinExistence type="inferred from homology"/>
<evidence type="ECO:0000255" key="1">
    <source>
        <dbReference type="HAMAP-Rule" id="MF_01821"/>
    </source>
</evidence>
<sequence>MLFAIGQRWISESENSLGLGIITGQDNRTVTISFPASDETRIYALASAPLTRVLFQKGDEITHQLGWKARVVDVMMRNELAFYLVQRLDNNEEIVVQEMELAHQISFSKPQDRLFSTQIDRNEHFVLRYKALKHQQEQFQSSLRGLRGNRAGLIPHQLHIAQEVGRRIAPRVLLADEVGLGKTIEAGMILQQQLLAEKVQRVLILVPETLQHQWLVEMLRRFNLHFSLFDEERCADFDNPEDHVEANPFVAENLIICALDWLVQQPKRAKQALAGEFDLLIVDEAHHLTWSEDSPSIAYELVMQLSAVIPAVLLLTATPEQLGQQSHFARLHLLDPNRFYSYRAFEKEQQQYQPVAKAVQSLLSEHILTVEEQNHLAELLSEQDIEPMLKVINSQADTEQKQVARGELMSNLIDRHGTGRLLFRNTRQGVQGFPHRIYHQIKLDLPTQYQNAINVLNMLGEIKDPELFYPEQIFQKMNADATWWRFDPRVDWLINLVKSLREEKILVICQDAITAIQLEQALREKEGIRSAVFHENMSIIERDRASAYFAQQEEGAQVLLSSSIGSEGRNFQFACHLVLFHLPNNPDLLEQCIGRLDRIGQRRDIQIYVPCFADTPQIRLAQWYHEGLNAFEETCPMGAILHEKCGAKLTEFLTSDTTDDFQAFIQQTHQQQLQLKSELEQGRDRLLELNSNGGEQAQQLANDIAIQDGSTELIDFTLNLFDIIGVEQEDLGEKSIVISPTGTMLVPDFPGLKEEGVTVTFDRDLALAREDLEFLTWDHPIVRNGIDLIVSGDIGKSAVALLVNKQLPTGTLLLELVYIIESQSPRGLQLTRFLPPTPLRLLLDIKGNDLSHQISFQGLQKQLKPMGKNMATKVIKIMRPAIEQLIKQSAKNVVEPAKMIIEQAKQLADQSLSAEINRLYALQAVNKNIRPEEIEQLESQRTLSLELLNQANWRLDSLRVIVSNKE</sequence>
<feature type="chain" id="PRO_1000088361" description="RNA polymerase-associated protein RapA">
    <location>
        <begin position="1"/>
        <end position="966"/>
    </location>
</feature>
<feature type="domain" description="Helicase ATP-binding" evidence="1">
    <location>
        <begin position="163"/>
        <end position="337"/>
    </location>
</feature>
<feature type="domain" description="Helicase C-terminal" evidence="1">
    <location>
        <begin position="489"/>
        <end position="643"/>
    </location>
</feature>
<feature type="short sequence motif" description="DEAH box">
    <location>
        <begin position="283"/>
        <end position="286"/>
    </location>
</feature>
<feature type="binding site" evidence="1">
    <location>
        <begin position="176"/>
        <end position="183"/>
    </location>
    <ligand>
        <name>ATP</name>
        <dbReference type="ChEBI" id="CHEBI:30616"/>
    </ligand>
</feature>
<name>RAPA_HISS1</name>
<accession>Q0I5G1</accession>